<proteinExistence type="inferred from homology"/>
<reference key="1">
    <citation type="journal article" date="2014" name="Mol. Biol. Evol.">
        <title>Clawing through evolution: toxin diversification and convergence in the ancient lineage Chilopoda (centipedes).</title>
        <authorList>
            <person name="Undheim E.A."/>
            <person name="Jones A."/>
            <person name="Clauser K.R."/>
            <person name="Holland J.W."/>
            <person name="Pineda S.S."/>
            <person name="King G.F."/>
            <person name="Fry B.G."/>
        </authorList>
    </citation>
    <scope>NUCLEOTIDE SEQUENCE [MRNA]</scope>
    <scope>NOMENCLATURE</scope>
    <source>
        <tissue>Venom gland</tissue>
    </source>
</reference>
<accession>P0DQD0</accession>
<sequence length="110" mass="11849">MTSTRKLSVSCLIVFMVSSLIAVSSGWLSIGKIAIKDGKCDPKNGNLYAIGEKWYNDEDCFEITCVQGDKGSVAQQVASCPVHAVKPGCELVFPGGTYPKCCPYYECPNS</sequence>
<feature type="signal peptide" evidence="1">
    <location>
        <begin position="1"/>
        <end position="26"/>
    </location>
</feature>
<feature type="chain" id="PRO_0000446814" description="U-scoloptoxin(16)-Er7a" evidence="3">
    <location>
        <begin position="27"/>
        <end position="110"/>
    </location>
</feature>
<organism>
    <name type="scientific">Ethmostigmus rubripes</name>
    <name type="common">Giant centipede</name>
    <dbReference type="NCBI Taxonomy" id="62613"/>
    <lineage>
        <taxon>Eukaryota</taxon>
        <taxon>Metazoa</taxon>
        <taxon>Ecdysozoa</taxon>
        <taxon>Arthropoda</taxon>
        <taxon>Myriapoda</taxon>
        <taxon>Chilopoda</taxon>
        <taxon>Pleurostigmophora</taxon>
        <taxon>Scolopendromorpha</taxon>
        <taxon>Scolopendridae</taxon>
        <taxon>Ethmostigmus</taxon>
    </lineage>
</organism>
<protein>
    <recommendedName>
        <fullName evidence="2">U-scoloptoxin(16)-Er7a</fullName>
        <shortName evidence="2">U-SLPTX(16)-Er7a</shortName>
    </recommendedName>
</protein>
<name>TXG7A_ETHRU</name>
<comment type="subcellular location">
    <subcellularLocation>
        <location evidence="4">Secreted</location>
    </subcellularLocation>
</comment>
<comment type="tissue specificity">
    <text evidence="4">Expressed by the venom gland.</text>
</comment>
<comment type="PTM">
    <text evidence="3">Contains 4 disulfide bonds.</text>
</comment>
<comment type="similarity">
    <text evidence="3">Belongs to the scoloptoxin-16 family.</text>
</comment>
<comment type="caution">
    <text evidence="4">All E.rubripes family members described in 'Undeheim et al., 2014' have not been imported into UniProtKB. Please, refer to this paper to access them.</text>
</comment>
<comment type="online information" name="National Center for Biotechnology Information (NCBI)">
    <link uri="https://www.ncbi.nlm.nih.gov/nuccore/GASI01000151"/>
</comment>
<dbReference type="SMR" id="P0DQD0"/>
<dbReference type="GO" id="GO:0005576">
    <property type="term" value="C:extracellular region"/>
    <property type="evidence" value="ECO:0007669"/>
    <property type="project" value="UniProtKB-SubCell"/>
</dbReference>
<dbReference type="GO" id="GO:0090729">
    <property type="term" value="F:toxin activity"/>
    <property type="evidence" value="ECO:0007669"/>
    <property type="project" value="UniProtKB-KW"/>
</dbReference>
<dbReference type="InterPro" id="IPR029277">
    <property type="entry name" value="SVWC_dom"/>
</dbReference>
<dbReference type="Pfam" id="PF15430">
    <property type="entry name" value="SVWC"/>
    <property type="match status" value="1"/>
</dbReference>
<dbReference type="SMART" id="SM01318">
    <property type="entry name" value="SVWC"/>
    <property type="match status" value="1"/>
</dbReference>
<keyword id="KW-1015">Disulfide bond</keyword>
<keyword id="KW-0964">Secreted</keyword>
<keyword id="KW-0732">Signal</keyword>
<keyword id="KW-0800">Toxin</keyword>
<evidence type="ECO:0000255" key="1"/>
<evidence type="ECO:0000303" key="2">
    <source>
    </source>
</evidence>
<evidence type="ECO:0000305" key="3"/>
<evidence type="ECO:0000305" key="4">
    <source>
    </source>
</evidence>